<dbReference type="EC" id="3.1.-.-"/>
<dbReference type="EMBL" id="DQ157700">
    <property type="protein sequence ID" value="AAZ67025.1"/>
    <property type="status" value="ALT_SEQ"/>
    <property type="molecule type" value="Genomic_DNA"/>
</dbReference>
<dbReference type="EMBL" id="AACP01000277">
    <property type="status" value="NOT_ANNOTATED_CDS"/>
    <property type="molecule type" value="Genomic_DNA"/>
</dbReference>
<dbReference type="SMR" id="Q0H8Y1"/>
<dbReference type="STRING" id="237631.Q0H8Y1"/>
<dbReference type="InParanoid" id="Q0H8Y1"/>
<dbReference type="Proteomes" id="UP000000561">
    <property type="component" value="Mitochondrion"/>
</dbReference>
<dbReference type="GO" id="GO:0005739">
    <property type="term" value="C:mitochondrion"/>
    <property type="evidence" value="ECO:0007669"/>
    <property type="project" value="UniProtKB-SubCell"/>
</dbReference>
<dbReference type="GO" id="GO:0045277">
    <property type="term" value="C:respiratory chain complex IV"/>
    <property type="evidence" value="ECO:0000318"/>
    <property type="project" value="GO_Central"/>
</dbReference>
<dbReference type="GO" id="GO:0004129">
    <property type="term" value="F:cytochrome-c oxidase activity"/>
    <property type="evidence" value="ECO:0007669"/>
    <property type="project" value="InterPro"/>
</dbReference>
<dbReference type="GO" id="GO:0004519">
    <property type="term" value="F:endonuclease activity"/>
    <property type="evidence" value="ECO:0007669"/>
    <property type="project" value="UniProtKB-KW"/>
</dbReference>
<dbReference type="GO" id="GO:0020037">
    <property type="term" value="F:heme binding"/>
    <property type="evidence" value="ECO:0007669"/>
    <property type="project" value="InterPro"/>
</dbReference>
<dbReference type="GO" id="GO:0009060">
    <property type="term" value="P:aerobic respiration"/>
    <property type="evidence" value="ECO:0000318"/>
    <property type="project" value="GO_Central"/>
</dbReference>
<dbReference type="GO" id="GO:0006314">
    <property type="term" value="P:intron homing"/>
    <property type="evidence" value="ECO:0007669"/>
    <property type="project" value="UniProtKB-KW"/>
</dbReference>
<dbReference type="GO" id="GO:0022904">
    <property type="term" value="P:respiratory electron transport chain"/>
    <property type="evidence" value="ECO:0000318"/>
    <property type="project" value="GO_Central"/>
</dbReference>
<dbReference type="FunFam" id="3.10.28.10:FF:000021">
    <property type="entry name" value="Intron-encoded DNA endonuclease ai2a"/>
    <property type="match status" value="1"/>
</dbReference>
<dbReference type="FunFam" id="1.20.210.10:FF:000014">
    <property type="entry name" value="Probable intron-encoded endonuclease aI4"/>
    <property type="match status" value="1"/>
</dbReference>
<dbReference type="FunFam" id="3.10.28.10:FF:000043">
    <property type="entry name" value="Probable intron-encoded endonuclease aI5"/>
    <property type="match status" value="1"/>
</dbReference>
<dbReference type="Gene3D" id="1.20.210.10">
    <property type="entry name" value="Cytochrome c oxidase-like, subunit I domain"/>
    <property type="match status" value="1"/>
</dbReference>
<dbReference type="Gene3D" id="3.10.28.10">
    <property type="entry name" value="Homing endonucleases"/>
    <property type="match status" value="2"/>
</dbReference>
<dbReference type="InterPro" id="IPR023616">
    <property type="entry name" value="Cyt_c_oxase-like_su1_dom"/>
</dbReference>
<dbReference type="InterPro" id="IPR036927">
    <property type="entry name" value="Cyt_c_oxase-like_su1_sf"/>
</dbReference>
<dbReference type="InterPro" id="IPR000883">
    <property type="entry name" value="Cyt_C_Oxase_1"/>
</dbReference>
<dbReference type="InterPro" id="IPR027434">
    <property type="entry name" value="Homing_endonucl"/>
</dbReference>
<dbReference type="InterPro" id="IPR004860">
    <property type="entry name" value="LAGLIDADG_dom"/>
</dbReference>
<dbReference type="PANTHER" id="PTHR10422">
    <property type="entry name" value="CYTOCHROME C OXIDASE SUBUNIT 1"/>
    <property type="match status" value="1"/>
</dbReference>
<dbReference type="PANTHER" id="PTHR10422:SF18">
    <property type="entry name" value="CYTOCHROME C OXIDASE SUBUNIT 1"/>
    <property type="match status" value="1"/>
</dbReference>
<dbReference type="Pfam" id="PF00115">
    <property type="entry name" value="COX1"/>
    <property type="match status" value="1"/>
</dbReference>
<dbReference type="Pfam" id="PF00961">
    <property type="entry name" value="LAGLIDADG_1"/>
    <property type="match status" value="2"/>
</dbReference>
<dbReference type="PRINTS" id="PR01165">
    <property type="entry name" value="CYCOXIDASEI"/>
</dbReference>
<dbReference type="SUPFAM" id="SSF81442">
    <property type="entry name" value="Cytochrome c oxidase subunit I-like"/>
    <property type="match status" value="1"/>
</dbReference>
<dbReference type="SUPFAM" id="SSF55608">
    <property type="entry name" value="Homing endonucleases"/>
    <property type="match status" value="2"/>
</dbReference>
<dbReference type="PROSITE" id="PS50855">
    <property type="entry name" value="COX1"/>
    <property type="match status" value="1"/>
</dbReference>
<keyword id="KW-0255">Endonuclease</keyword>
<keyword id="KW-0378">Hydrolase</keyword>
<keyword id="KW-0404">Intron homing</keyword>
<keyword id="KW-0472">Membrane</keyword>
<keyword id="KW-0496">Mitochondrion</keyword>
<keyword id="KW-0540">Nuclease</keyword>
<keyword id="KW-1185">Reference proteome</keyword>
<keyword id="KW-0812">Transmembrane</keyword>
<keyword id="KW-1133">Transmembrane helix</keyword>
<gene>
    <name type="primary">aI5</name>
</gene>
<proteinExistence type="inferred from homology"/>
<reference key="1">
    <citation type="submission" date="2005-08" db="EMBL/GenBank/DDBJ databases">
        <title>Annotation of mitochondrial genome of Ustilago maydis and comparative analysis of basidiomycete mtDNAs.</title>
        <authorList>
            <person name="Kennell J.C."/>
            <person name="Boehmer C."/>
        </authorList>
    </citation>
    <scope>NUCLEOTIDE SEQUENCE [LARGE SCALE GENOMIC DNA]</scope>
    <source>
        <strain>DSM 14603 / FGSC 9021 / UM521</strain>
    </source>
</reference>
<reference key="2">
    <citation type="journal article" date="2006" name="Nature">
        <title>Insights from the genome of the biotrophic fungal plant pathogen Ustilago maydis.</title>
        <authorList>
            <person name="Kaemper J."/>
            <person name="Kahmann R."/>
            <person name="Boelker M."/>
            <person name="Ma L.-J."/>
            <person name="Brefort T."/>
            <person name="Saville B.J."/>
            <person name="Banuett F."/>
            <person name="Kronstad J.W."/>
            <person name="Gold S.E."/>
            <person name="Mueller O."/>
            <person name="Perlin M.H."/>
            <person name="Woesten H.A.B."/>
            <person name="de Vries R."/>
            <person name="Ruiz-Herrera J."/>
            <person name="Reynaga-Pena C.G."/>
            <person name="Snetselaar K."/>
            <person name="McCann M."/>
            <person name="Perez-Martin J."/>
            <person name="Feldbruegge M."/>
            <person name="Basse C.W."/>
            <person name="Steinberg G."/>
            <person name="Ibeas J.I."/>
            <person name="Holloman W."/>
            <person name="Guzman P."/>
            <person name="Farman M.L."/>
            <person name="Stajich J.E."/>
            <person name="Sentandreu R."/>
            <person name="Gonzalez-Prieto J.M."/>
            <person name="Kennell J.C."/>
            <person name="Molina L."/>
            <person name="Schirawski J."/>
            <person name="Mendoza-Mendoza A."/>
            <person name="Greilinger D."/>
            <person name="Muench K."/>
            <person name="Roessel N."/>
            <person name="Scherer M."/>
            <person name="Vranes M."/>
            <person name="Ladendorf O."/>
            <person name="Vincon V."/>
            <person name="Fuchs U."/>
            <person name="Sandrock B."/>
            <person name="Meng S."/>
            <person name="Ho E.C.H."/>
            <person name="Cahill M.J."/>
            <person name="Boyce K.J."/>
            <person name="Klose J."/>
            <person name="Klosterman S.J."/>
            <person name="Deelstra H.J."/>
            <person name="Ortiz-Castellanos L."/>
            <person name="Li W."/>
            <person name="Sanchez-Alonso P."/>
            <person name="Schreier P.H."/>
            <person name="Haeuser-Hahn I."/>
            <person name="Vaupel M."/>
            <person name="Koopmann E."/>
            <person name="Friedrich G."/>
            <person name="Voss H."/>
            <person name="Schlueter T."/>
            <person name="Margolis J."/>
            <person name="Platt D."/>
            <person name="Swimmer C."/>
            <person name="Gnirke A."/>
            <person name="Chen F."/>
            <person name="Vysotskaia V."/>
            <person name="Mannhaupt G."/>
            <person name="Gueldener U."/>
            <person name="Muensterkoetter M."/>
            <person name="Haase D."/>
            <person name="Oesterheld M."/>
            <person name="Mewes H.-W."/>
            <person name="Mauceli E.W."/>
            <person name="DeCaprio D."/>
            <person name="Wade C.M."/>
            <person name="Butler J."/>
            <person name="Young S.K."/>
            <person name="Jaffe D.B."/>
            <person name="Calvo S.E."/>
            <person name="Nusbaum C."/>
            <person name="Galagan J.E."/>
            <person name="Birren B.W."/>
        </authorList>
    </citation>
    <scope>NUCLEOTIDE SEQUENCE [LARGE SCALE GENOMIC DNA]</scope>
    <source>
        <strain>DSM 14603 / FGSC 9021 / UM521</strain>
    </source>
</reference>
<accession>Q0H8Y1</accession>
<geneLocation type="mitochondrion"/>
<feature type="chain" id="PRO_0000271158" description="Truncated non-functional cytochrome oxidase 1">
    <location>
        <begin position="1"/>
        <end status="unknown"/>
    </location>
</feature>
<feature type="chain" id="PRO_0000271159" description="Intron-encoded endonuclease aI5">
    <location>
        <begin status="unknown"/>
        <end position="536"/>
    </location>
</feature>
<feature type="transmembrane region" description="Helical" evidence="2">
    <location>
        <begin position="15"/>
        <end position="35"/>
    </location>
</feature>
<feature type="transmembrane region" description="Helical" evidence="2">
    <location>
        <begin position="56"/>
        <end position="76"/>
    </location>
</feature>
<feature type="transmembrane region" description="Helical" evidence="2">
    <location>
        <begin position="99"/>
        <end position="119"/>
    </location>
</feature>
<feature type="transmembrane region" description="Helical" evidence="2">
    <location>
        <begin position="145"/>
        <end position="165"/>
    </location>
</feature>
<feature type="transmembrane region" description="Helical" evidence="2">
    <location>
        <begin position="183"/>
        <end position="203"/>
    </location>
</feature>
<feature type="transmembrane region" description="Helical" evidence="2">
    <location>
        <begin position="234"/>
        <end position="254"/>
    </location>
</feature>
<feature type="region of interest" description="COX1 exons 1 to 5 encoded">
    <location>
        <begin position="1"/>
        <end position="235"/>
    </location>
</feature>
<feature type="region of interest" description="COX1 intron 5 encoded">
    <location>
        <begin position="237"/>
        <end position="536"/>
    </location>
</feature>
<evidence type="ECO:0000250" key="1"/>
<evidence type="ECO:0000255" key="2"/>
<evidence type="ECO:0000305" key="3"/>
<name>AI5_MYCMD</name>
<protein>
    <recommendedName>
        <fullName>Probable intron-encoded endonuclease aI5</fullName>
    </recommendedName>
    <component>
        <recommendedName>
            <fullName>Truncated non-functional cytochrome oxidase 1</fullName>
        </recommendedName>
    </component>
    <component>
        <recommendedName>
            <fullName>Intron-encoded endonuclease aI5</fullName>
            <ecNumber>3.1.-.-</ecNumber>
        </recommendedName>
    </component>
</protein>
<organism>
    <name type="scientific">Mycosarcoma maydis</name>
    <name type="common">Corn smut fungus</name>
    <name type="synonym">Ustilago maydis</name>
    <dbReference type="NCBI Taxonomy" id="5270"/>
    <lineage>
        <taxon>Eukaryota</taxon>
        <taxon>Fungi</taxon>
        <taxon>Dikarya</taxon>
        <taxon>Basidiomycota</taxon>
        <taxon>Ustilaginomycotina</taxon>
        <taxon>Ustilaginomycetes</taxon>
        <taxon>Ustilaginales</taxon>
        <taxon>Ustilaginaceae</taxon>
        <taxon>Mycosarcoma</taxon>
    </lineage>
</organism>
<sequence length="536" mass="60704">MVRWLYSTNAKDIGTLYLIFAVFAAMIGTAFSVLIRMELAAPGVQYLNGDHQLYNVIITAHAFVMIFFMVMPAMVGGFGNYLVPVMIGAPDMAFPRLNNISFWLLPPSLILLLASAFVEQGAGTGWTVYPPLSGLQSHSGGSVDLAIFSLHLSGISSMLGAMNFITTVLNMRNPGMTLHKLPLFVWAIFVTAILLLLSLPVLAGAITMLLTDRNFNTSFYDPAGGGDPILYQHLFSKTTLYISFFYLIYKFTLLKYSIYTNTGTTTVENVFNFNNFYLEYNKTYPNTKVPSTSFLEWFVGFTEGDGSFIVSTRGNLMFVITQSTMDIQVLHYIEQELGFGRVIKQGHKTSRFIVQDMNNLYILIQLFNGNIVFPSKQNSFFKFVHHFNKLSNFPTVAIISSLTVPTYYDNWFCGFTDARHPRGCFTCSLLGNSTAYRFRFLLTQKGEMNKEVLISIANLMKGTVRSHSVKDVYEITVNGIRNMEKIIDYFTNHKLYSKKAKSYQIWLEIYESIKNGEHLSPDSRNYLKMKTQQINK</sequence>
<comment type="function">
    <text evidence="1">Mitochondrial DNA endonuclease involved in intron homing.</text>
</comment>
<comment type="subcellular location">
    <subcellularLocation>
        <location>Mitochondrion</location>
    </subcellularLocation>
    <subcellularLocation>
        <location evidence="3">Membrane</location>
        <topology evidence="3">Multi-pass membrane protein</topology>
    </subcellularLocation>
</comment>
<comment type="PTM">
    <text>The mature protein may arise from proteolytic cleavage of an in-frame translation of COX1 exons 1 to 5 plus intron 5, containing the aI5 open reading frame.</text>
</comment>
<comment type="similarity">
    <text evidence="3">In the C-terminal section; belongs to the LAGLIDADG endonuclease family.</text>
</comment>
<comment type="similarity">
    <text evidence="3">In the N-terminal section; belongs to the heme-copper respiratory oxidase family.</text>
</comment>
<comment type="sequence caution" evidence="3">
    <conflict type="erroneous gene model prediction">
        <sequence resource="EMBL-CDS" id="AAZ67025"/>
    </conflict>
</comment>